<name>RK2_CUCSA</name>
<comment type="subunit">
    <text evidence="1">Part of the 50S ribosomal subunit.</text>
</comment>
<comment type="subcellular location">
    <subcellularLocation>
        <location>Plastid</location>
        <location>Chloroplast</location>
    </subcellularLocation>
</comment>
<comment type="similarity">
    <text evidence="4">Belongs to the universal ribosomal protein uL2 family.</text>
</comment>
<dbReference type="EMBL" id="DQ119058">
    <property type="protein sequence ID" value="AAZ94691.1"/>
    <property type="molecule type" value="Genomic_DNA"/>
</dbReference>
<dbReference type="EMBL" id="DQ119058">
    <property type="protein sequence ID" value="AAZ94708.1"/>
    <property type="molecule type" value="Genomic_DNA"/>
</dbReference>
<dbReference type="EMBL" id="AJ970307">
    <property type="protein sequence ID" value="CAJ00800.1"/>
    <property type="molecule type" value="Genomic_DNA"/>
</dbReference>
<dbReference type="EMBL" id="AJ970307">
    <property type="protein sequence ID" value="CAJ00822.1"/>
    <property type="molecule type" value="Genomic_DNA"/>
</dbReference>
<dbReference type="EMBL" id="DQ865975">
    <property type="protein sequence ID" value="ABI97458.1"/>
    <property type="molecule type" value="Genomic_DNA"/>
</dbReference>
<dbReference type="EMBL" id="DQ865975">
    <property type="protein sequence ID" value="ABI97477.1"/>
    <property type="molecule type" value="Genomic_DNA"/>
</dbReference>
<dbReference type="EMBL" id="DQ865976">
    <property type="protein sequence ID" value="ABI98787.1"/>
    <property type="molecule type" value="Genomic_DNA"/>
</dbReference>
<dbReference type="EMBL" id="DQ865976">
    <property type="protein sequence ID" value="ABI98809.1"/>
    <property type="molecule type" value="Genomic_DNA"/>
</dbReference>
<dbReference type="SMR" id="Q4VZK5"/>
<dbReference type="KEGG" id="csv:3429292"/>
<dbReference type="KEGG" id="csv:3429293"/>
<dbReference type="eggNOG" id="KOG0438">
    <property type="taxonomic scope" value="Eukaryota"/>
</dbReference>
<dbReference type="OrthoDB" id="563959at2759"/>
<dbReference type="GO" id="GO:0009507">
    <property type="term" value="C:chloroplast"/>
    <property type="evidence" value="ECO:0007669"/>
    <property type="project" value="UniProtKB-SubCell"/>
</dbReference>
<dbReference type="GO" id="GO:0015934">
    <property type="term" value="C:large ribosomal subunit"/>
    <property type="evidence" value="ECO:0007669"/>
    <property type="project" value="InterPro"/>
</dbReference>
<dbReference type="GO" id="GO:0019843">
    <property type="term" value="F:rRNA binding"/>
    <property type="evidence" value="ECO:0007669"/>
    <property type="project" value="UniProtKB-UniRule"/>
</dbReference>
<dbReference type="GO" id="GO:0003735">
    <property type="term" value="F:structural constituent of ribosome"/>
    <property type="evidence" value="ECO:0007669"/>
    <property type="project" value="InterPro"/>
</dbReference>
<dbReference type="GO" id="GO:0016740">
    <property type="term" value="F:transferase activity"/>
    <property type="evidence" value="ECO:0007669"/>
    <property type="project" value="InterPro"/>
</dbReference>
<dbReference type="GO" id="GO:0006412">
    <property type="term" value="P:translation"/>
    <property type="evidence" value="ECO:0007669"/>
    <property type="project" value="UniProtKB-UniRule"/>
</dbReference>
<dbReference type="FunFam" id="4.10.950.10:FF:000001">
    <property type="entry name" value="50S ribosomal protein L2"/>
    <property type="match status" value="1"/>
</dbReference>
<dbReference type="FunFam" id="2.30.30.30:FF:000008">
    <property type="entry name" value="50S ribosomal protein L2, chloroplastic"/>
    <property type="match status" value="1"/>
</dbReference>
<dbReference type="FunFam" id="2.40.50.140:FF:000029">
    <property type="entry name" value="50S ribosomal protein L2, chloroplastic"/>
    <property type="match status" value="1"/>
</dbReference>
<dbReference type="Gene3D" id="2.30.30.30">
    <property type="match status" value="1"/>
</dbReference>
<dbReference type="Gene3D" id="2.40.50.140">
    <property type="entry name" value="Nucleic acid-binding proteins"/>
    <property type="match status" value="1"/>
</dbReference>
<dbReference type="Gene3D" id="4.10.950.10">
    <property type="entry name" value="Ribosomal protein L2, domain 3"/>
    <property type="match status" value="1"/>
</dbReference>
<dbReference type="HAMAP" id="MF_01320_B">
    <property type="entry name" value="Ribosomal_uL2_B"/>
    <property type="match status" value="1"/>
</dbReference>
<dbReference type="InterPro" id="IPR012340">
    <property type="entry name" value="NA-bd_OB-fold"/>
</dbReference>
<dbReference type="InterPro" id="IPR014722">
    <property type="entry name" value="Rib_uL2_dom2"/>
</dbReference>
<dbReference type="InterPro" id="IPR002171">
    <property type="entry name" value="Ribosomal_uL2"/>
</dbReference>
<dbReference type="InterPro" id="IPR005880">
    <property type="entry name" value="Ribosomal_uL2_bac/org-type"/>
</dbReference>
<dbReference type="InterPro" id="IPR022669">
    <property type="entry name" value="Ribosomal_uL2_C"/>
</dbReference>
<dbReference type="InterPro" id="IPR022671">
    <property type="entry name" value="Ribosomal_uL2_CS"/>
</dbReference>
<dbReference type="InterPro" id="IPR014726">
    <property type="entry name" value="Ribosomal_uL2_dom3"/>
</dbReference>
<dbReference type="InterPro" id="IPR022666">
    <property type="entry name" value="Ribosomal_uL2_RNA-bd_dom"/>
</dbReference>
<dbReference type="InterPro" id="IPR008991">
    <property type="entry name" value="Translation_prot_SH3-like_sf"/>
</dbReference>
<dbReference type="NCBIfam" id="TIGR01171">
    <property type="entry name" value="rplB_bact"/>
    <property type="match status" value="1"/>
</dbReference>
<dbReference type="PANTHER" id="PTHR13691:SF5">
    <property type="entry name" value="LARGE RIBOSOMAL SUBUNIT PROTEIN UL2M"/>
    <property type="match status" value="1"/>
</dbReference>
<dbReference type="PANTHER" id="PTHR13691">
    <property type="entry name" value="RIBOSOMAL PROTEIN L2"/>
    <property type="match status" value="1"/>
</dbReference>
<dbReference type="Pfam" id="PF00181">
    <property type="entry name" value="Ribosomal_L2"/>
    <property type="match status" value="1"/>
</dbReference>
<dbReference type="Pfam" id="PF03947">
    <property type="entry name" value="Ribosomal_L2_C"/>
    <property type="match status" value="1"/>
</dbReference>
<dbReference type="PIRSF" id="PIRSF002158">
    <property type="entry name" value="Ribosomal_L2"/>
    <property type="match status" value="1"/>
</dbReference>
<dbReference type="SMART" id="SM01383">
    <property type="entry name" value="Ribosomal_L2"/>
    <property type="match status" value="1"/>
</dbReference>
<dbReference type="SMART" id="SM01382">
    <property type="entry name" value="Ribosomal_L2_C"/>
    <property type="match status" value="1"/>
</dbReference>
<dbReference type="SUPFAM" id="SSF50249">
    <property type="entry name" value="Nucleic acid-binding proteins"/>
    <property type="match status" value="1"/>
</dbReference>
<dbReference type="SUPFAM" id="SSF50104">
    <property type="entry name" value="Translation proteins SH3-like domain"/>
    <property type="match status" value="1"/>
</dbReference>
<dbReference type="PROSITE" id="PS00467">
    <property type="entry name" value="RIBOSOMAL_L2"/>
    <property type="match status" value="1"/>
</dbReference>
<reference key="1">
    <citation type="journal article" date="2006" name="Plant Cell Rep.">
        <title>Complete sequence and organization of the cucumber (Cucumis sativus L. cv. Baekmibaekdadagi) chloroplast genome.</title>
        <authorList>
            <person name="Kim J.-S."/>
            <person name="Jung J.D."/>
            <person name="Lee J.-A."/>
            <person name="Park H.-W."/>
            <person name="Oh K.-H."/>
            <person name="Jeong W.J."/>
            <person name="Choi D.-W."/>
            <person name="Liu J.R."/>
            <person name="Cho K.Y."/>
        </authorList>
    </citation>
    <scope>NUCLEOTIDE SEQUENCE [LARGE SCALE GENOMIC DNA]</scope>
    <source>
        <strain>cv. Baekmibaekdadagi</strain>
    </source>
</reference>
<reference key="2">
    <citation type="journal article" date="2007" name="Cell. Mol. Biol. Lett.">
        <title>The complete structure of the cucumber (Cucumis sativus L.) chloroplast genome: its composition and comparative analysis.</title>
        <authorList>
            <person name="Plader W.W."/>
            <person name="Yukawa Y."/>
            <person name="Sugiura M."/>
            <person name="Malepszy S."/>
        </authorList>
    </citation>
    <scope>NUCLEOTIDE SEQUENCE [LARGE SCALE GENOMIC DNA]</scope>
    <source>
        <strain>cv. Borszczagowski</strain>
    </source>
</reference>
<reference key="3">
    <citation type="journal article" date="2007" name="Genome">
        <title>Sequencing cucumber (Cucumis sativus L.) chloroplast genomes identifies differences between chilling-tolerant and -susceptible cucumber lines.</title>
        <authorList>
            <person name="Chung S.-M."/>
            <person name="Gordon V.S."/>
            <person name="Staub J.E."/>
        </authorList>
    </citation>
    <scope>NUCLEOTIDE SEQUENCE [LARGE SCALE GENOMIC DNA]</scope>
    <source>
        <strain>cv. Chipper</strain>
        <strain>cv. Gy14</strain>
    </source>
</reference>
<proteinExistence type="inferred from homology"/>
<accession>Q4VZK5</accession>
<accession>A5J1X6</accession>
<accession>A5J259</accession>
<sequence>MAIHLYKTSTPSTRNGAVDSQVKSNPRNNLIYGQHRCGKGRNARGIITAGHRGGGHKRLYRKIDFRRNEKDIYGRIVTIEYDPNRNAYICLIHYGDGEKRYILHPRGAIIGDTIVSGTEVPIKMGNALPLTDMPLGTAIHNIEITLGKGGQLARAAGAVAKLIAKEGKSATLKLPSGEVRLISKNCSATVGQVGNAGVNQKSLGRAGSKCWLGKRPVVRGVVMNPVDHPHGGGEGRAPIGRKKPATPWGYPALGRRSRKRNKYSDNLILRRRSK</sequence>
<feature type="chain" id="PRO_0000237273" description="Large ribosomal subunit protein uL2cz/uL2cy">
    <location>
        <begin position="1"/>
        <end position="274"/>
    </location>
</feature>
<feature type="region of interest" description="Disordered" evidence="3">
    <location>
        <begin position="1"/>
        <end position="25"/>
    </location>
</feature>
<feature type="region of interest" description="Disordered" evidence="3">
    <location>
        <begin position="224"/>
        <end position="274"/>
    </location>
</feature>
<feature type="sequence conflict" description="In Ref. 3; ABI98809/ABI97477/ABI97458." evidence="4" ref="3">
    <original>L</original>
    <variation>LS</variation>
    <location>
        <position position="130"/>
    </location>
</feature>
<protein>
    <recommendedName>
        <fullName evidence="2">Large ribosomal subunit protein uL2cz/uL2cy</fullName>
    </recommendedName>
    <alternativeName>
        <fullName evidence="4">50S ribosomal protein L2, chloroplastic</fullName>
    </alternativeName>
</protein>
<gene>
    <name type="primary">rpl2-A</name>
    <name type="ordered locus">CsCp083</name>
</gene>
<gene>
    <name type="primary">rpl2-B</name>
    <name type="ordered locus">CsCp130</name>
</gene>
<geneLocation type="chloroplast"/>
<organism>
    <name type="scientific">Cucumis sativus</name>
    <name type="common">Cucumber</name>
    <dbReference type="NCBI Taxonomy" id="3659"/>
    <lineage>
        <taxon>Eukaryota</taxon>
        <taxon>Viridiplantae</taxon>
        <taxon>Streptophyta</taxon>
        <taxon>Embryophyta</taxon>
        <taxon>Tracheophyta</taxon>
        <taxon>Spermatophyta</taxon>
        <taxon>Magnoliopsida</taxon>
        <taxon>eudicotyledons</taxon>
        <taxon>Gunneridae</taxon>
        <taxon>Pentapetalae</taxon>
        <taxon>rosids</taxon>
        <taxon>fabids</taxon>
        <taxon>Cucurbitales</taxon>
        <taxon>Cucurbitaceae</taxon>
        <taxon>Benincaseae</taxon>
        <taxon>Cucumis</taxon>
    </lineage>
</organism>
<keyword id="KW-0150">Chloroplast</keyword>
<keyword id="KW-0934">Plastid</keyword>
<keyword id="KW-0687">Ribonucleoprotein</keyword>
<keyword id="KW-0689">Ribosomal protein</keyword>
<evidence type="ECO:0000250" key="1"/>
<evidence type="ECO:0000255" key="2">
    <source>
        <dbReference type="HAMAP-Rule" id="MF_01320"/>
    </source>
</evidence>
<evidence type="ECO:0000256" key="3">
    <source>
        <dbReference type="SAM" id="MobiDB-lite"/>
    </source>
</evidence>
<evidence type="ECO:0000305" key="4"/>